<name>CQ067_HUMAN</name>
<gene>
    <name type="primary">C17orf67</name>
</gene>
<reference key="1">
    <citation type="journal article" date="2006" name="Nature">
        <title>DNA sequence of human chromosome 17 and analysis of rearrangement in the human lineage.</title>
        <authorList>
            <person name="Zody M.C."/>
            <person name="Garber M."/>
            <person name="Adams D.J."/>
            <person name="Sharpe T."/>
            <person name="Harrow J."/>
            <person name="Lupski J.R."/>
            <person name="Nicholson C."/>
            <person name="Searle S.M."/>
            <person name="Wilming L."/>
            <person name="Young S.K."/>
            <person name="Abouelleil A."/>
            <person name="Allen N.R."/>
            <person name="Bi W."/>
            <person name="Bloom T."/>
            <person name="Borowsky M.L."/>
            <person name="Bugalter B.E."/>
            <person name="Butler J."/>
            <person name="Chang J.L."/>
            <person name="Chen C.-K."/>
            <person name="Cook A."/>
            <person name="Corum B."/>
            <person name="Cuomo C.A."/>
            <person name="de Jong P.J."/>
            <person name="DeCaprio D."/>
            <person name="Dewar K."/>
            <person name="FitzGerald M."/>
            <person name="Gilbert J."/>
            <person name="Gibson R."/>
            <person name="Gnerre S."/>
            <person name="Goldstein S."/>
            <person name="Grafham D.V."/>
            <person name="Grocock R."/>
            <person name="Hafez N."/>
            <person name="Hagopian D.S."/>
            <person name="Hart E."/>
            <person name="Norman C.H."/>
            <person name="Humphray S."/>
            <person name="Jaffe D.B."/>
            <person name="Jones M."/>
            <person name="Kamal M."/>
            <person name="Khodiyar V.K."/>
            <person name="LaButti K."/>
            <person name="Laird G."/>
            <person name="Lehoczky J."/>
            <person name="Liu X."/>
            <person name="Lokyitsang T."/>
            <person name="Loveland J."/>
            <person name="Lui A."/>
            <person name="Macdonald P."/>
            <person name="Major J.E."/>
            <person name="Matthews L."/>
            <person name="Mauceli E."/>
            <person name="McCarroll S.A."/>
            <person name="Mihalev A.H."/>
            <person name="Mudge J."/>
            <person name="Nguyen C."/>
            <person name="Nicol R."/>
            <person name="O'Leary S.B."/>
            <person name="Osoegawa K."/>
            <person name="Schwartz D.C."/>
            <person name="Shaw-Smith C."/>
            <person name="Stankiewicz P."/>
            <person name="Steward C."/>
            <person name="Swarbreck D."/>
            <person name="Venkataraman V."/>
            <person name="Whittaker C.A."/>
            <person name="Yang X."/>
            <person name="Zimmer A.R."/>
            <person name="Bradley A."/>
            <person name="Hubbard T."/>
            <person name="Birren B.W."/>
            <person name="Rogers J."/>
            <person name="Lander E.S."/>
            <person name="Nusbaum C."/>
        </authorList>
    </citation>
    <scope>NUCLEOTIDE SEQUENCE [LARGE SCALE GENOMIC DNA]</scope>
</reference>
<reference key="2">
    <citation type="journal article" date="2004" name="Genome Res.">
        <title>The status, quality, and expansion of the NIH full-length cDNA project: the Mammalian Gene Collection (MGC).</title>
        <authorList>
            <consortium name="The MGC Project Team"/>
        </authorList>
    </citation>
    <scope>NUCLEOTIDE SEQUENCE [LARGE SCALE MRNA]</scope>
    <source>
        <tissue>Brain</tissue>
    </source>
</reference>
<feature type="signal peptide" evidence="1">
    <location>
        <begin position="1"/>
        <end position="18"/>
    </location>
</feature>
<feature type="chain" id="PRO_0000287179" description="Uncharacterized protein C17orf67">
    <location>
        <begin position="19"/>
        <end position="90"/>
    </location>
</feature>
<feature type="region of interest" description="Disordered" evidence="2">
    <location>
        <begin position="28"/>
        <end position="50"/>
    </location>
</feature>
<evidence type="ECO:0000255" key="1"/>
<evidence type="ECO:0000256" key="2">
    <source>
        <dbReference type="SAM" id="MobiDB-lite"/>
    </source>
</evidence>
<evidence type="ECO:0000305" key="3"/>
<keyword id="KW-1185">Reference proteome</keyword>
<keyword id="KW-0964">Secreted</keyword>
<keyword id="KW-0732">Signal</keyword>
<proteinExistence type="evidence at protein level"/>
<sequence>MKTLPVLVLSLTLLTVFSETSPILTEKQAKQLLRSRRQDRPSKPGFPDEPMREYMHHLLALEHRAEEQFLEHWLNPHCKPHCDRNRIHPV</sequence>
<dbReference type="EMBL" id="AC106858">
    <property type="status" value="NOT_ANNOTATED_CDS"/>
    <property type="molecule type" value="Genomic_DNA"/>
</dbReference>
<dbReference type="EMBL" id="BC093905">
    <property type="protein sequence ID" value="AAH93905.1"/>
    <property type="molecule type" value="mRNA"/>
</dbReference>
<dbReference type="EMBL" id="BC093907">
    <property type="protein sequence ID" value="AAH93907.1"/>
    <property type="molecule type" value="mRNA"/>
</dbReference>
<dbReference type="CCDS" id="CCDS42364.2"/>
<dbReference type="RefSeq" id="NP_001078899.2">
    <property type="nucleotide sequence ID" value="NM_001085430.4"/>
</dbReference>
<dbReference type="SMR" id="Q0P5P2"/>
<dbReference type="BioGRID" id="130843">
    <property type="interactions" value="2"/>
</dbReference>
<dbReference type="FunCoup" id="Q0P5P2">
    <property type="interactions" value="13"/>
</dbReference>
<dbReference type="IntAct" id="Q0P5P2">
    <property type="interactions" value="3"/>
</dbReference>
<dbReference type="STRING" id="9606.ENSP00000380959"/>
<dbReference type="iPTMnet" id="Q0P5P2"/>
<dbReference type="PhosphoSitePlus" id="Q0P5P2"/>
<dbReference type="BioMuta" id="C17orf67"/>
<dbReference type="DMDM" id="238054264"/>
<dbReference type="PaxDb" id="9606-ENSP00000380959"/>
<dbReference type="Antibodypedia" id="52531">
    <property type="antibodies" value="9 antibodies from 7 providers"/>
</dbReference>
<dbReference type="DNASU" id="339210"/>
<dbReference type="Ensembl" id="ENST00000397861.7">
    <property type="protein sequence ID" value="ENSP00000380959.2"/>
    <property type="gene ID" value="ENSG00000214226.9"/>
</dbReference>
<dbReference type="GeneID" id="339210"/>
<dbReference type="KEGG" id="hsa:339210"/>
<dbReference type="MANE-Select" id="ENST00000397861.7">
    <property type="protein sequence ID" value="ENSP00000380959.2"/>
    <property type="RefSeq nucleotide sequence ID" value="NM_001085430.4"/>
    <property type="RefSeq protein sequence ID" value="NP_001078899.2"/>
</dbReference>
<dbReference type="UCSC" id="uc002iuq.5">
    <property type="organism name" value="human"/>
</dbReference>
<dbReference type="AGR" id="HGNC:27900"/>
<dbReference type="CTD" id="339210"/>
<dbReference type="DisGeNET" id="339210"/>
<dbReference type="GeneCards" id="C17orf67"/>
<dbReference type="HGNC" id="HGNC:27900">
    <property type="gene designation" value="C17orf67"/>
</dbReference>
<dbReference type="HPA" id="ENSG00000214226">
    <property type="expression patterns" value="Low tissue specificity"/>
</dbReference>
<dbReference type="MalaCards" id="C17orf67"/>
<dbReference type="neXtProt" id="NX_Q0P5P2"/>
<dbReference type="OpenTargets" id="ENSG00000214226"/>
<dbReference type="PharmGKB" id="PA142672250"/>
<dbReference type="VEuPathDB" id="HostDB:ENSG00000214226"/>
<dbReference type="eggNOG" id="ENOG502S8D0">
    <property type="taxonomic scope" value="Eukaryota"/>
</dbReference>
<dbReference type="GeneTree" id="ENSGT00390000006555"/>
<dbReference type="HOGENOM" id="CLU_169362_0_0_1"/>
<dbReference type="InParanoid" id="Q0P5P2"/>
<dbReference type="OMA" id="ETNMEYW"/>
<dbReference type="OrthoDB" id="9923832at2759"/>
<dbReference type="PAN-GO" id="Q0P5P2">
    <property type="GO annotations" value="0 GO annotations based on evolutionary models"/>
</dbReference>
<dbReference type="PhylomeDB" id="Q0P5P2"/>
<dbReference type="TreeFam" id="TF354165"/>
<dbReference type="PathwayCommons" id="Q0P5P2"/>
<dbReference type="SignaLink" id="Q0P5P2"/>
<dbReference type="BioGRID-ORCS" id="339210">
    <property type="hits" value="7 hits in 662 CRISPR screens"/>
</dbReference>
<dbReference type="ChiTaRS" id="C17orf67">
    <property type="organism name" value="human"/>
</dbReference>
<dbReference type="GenomeRNAi" id="339210"/>
<dbReference type="Pharos" id="Q0P5P2">
    <property type="development level" value="Tdark"/>
</dbReference>
<dbReference type="PRO" id="PR:Q0P5P2"/>
<dbReference type="Proteomes" id="UP000005640">
    <property type="component" value="Chromosome 17"/>
</dbReference>
<dbReference type="RNAct" id="Q0P5P2">
    <property type="molecule type" value="protein"/>
</dbReference>
<dbReference type="Bgee" id="ENSG00000214226">
    <property type="expression patterns" value="Expressed in male germ line stem cell (sensu Vertebrata) in testis and 131 other cell types or tissues"/>
</dbReference>
<dbReference type="GO" id="GO:0005576">
    <property type="term" value="C:extracellular region"/>
    <property type="evidence" value="ECO:0007669"/>
    <property type="project" value="UniProtKB-SubCell"/>
</dbReference>
<dbReference type="InterPro" id="IPR027870">
    <property type="entry name" value="DUF4543"/>
</dbReference>
<dbReference type="PANTHER" id="PTHR48415">
    <property type="entry name" value="GENE 525-RELATED"/>
    <property type="match status" value="1"/>
</dbReference>
<dbReference type="PANTHER" id="PTHR48415:SF1">
    <property type="entry name" value="GENE 525-RELATED"/>
    <property type="match status" value="1"/>
</dbReference>
<dbReference type="Pfam" id="PF15076">
    <property type="entry name" value="DUF4543"/>
    <property type="match status" value="1"/>
</dbReference>
<comment type="interaction">
    <interactant intactId="EBI-10226540">
        <id>Q0P5P2</id>
    </interactant>
    <interactant intactId="EBI-10179719">
        <id>A2RRN7</id>
        <label>CADPS</label>
    </interactant>
    <organismsDiffer>false</organismsDiffer>
    <experiments>3</experiments>
</comment>
<comment type="interaction">
    <interactant intactId="EBI-10226540">
        <id>Q0P5P2</id>
    </interactant>
    <interactant intactId="EBI-349832">
        <id>Q9HD26</id>
        <label>GOPC</label>
    </interactant>
    <organismsDiffer>false</organismsDiffer>
    <experiments>3</experiments>
</comment>
<comment type="interaction">
    <interactant intactId="EBI-10226540">
        <id>Q0P5P2</id>
    </interactant>
    <interactant intactId="EBI-748974">
        <id>Q96CV9</id>
        <label>OPTN</label>
    </interactant>
    <organismsDiffer>false</organismsDiffer>
    <experiments>3</experiments>
</comment>
<comment type="subcellular location">
    <subcellularLocation>
        <location evidence="3">Secreted</location>
    </subcellularLocation>
</comment>
<protein>
    <recommendedName>
        <fullName>Uncharacterized protein C17orf67</fullName>
    </recommendedName>
</protein>
<accession>Q0P5P2</accession>
<organism>
    <name type="scientific">Homo sapiens</name>
    <name type="common">Human</name>
    <dbReference type="NCBI Taxonomy" id="9606"/>
    <lineage>
        <taxon>Eukaryota</taxon>
        <taxon>Metazoa</taxon>
        <taxon>Chordata</taxon>
        <taxon>Craniata</taxon>
        <taxon>Vertebrata</taxon>
        <taxon>Euteleostomi</taxon>
        <taxon>Mammalia</taxon>
        <taxon>Eutheria</taxon>
        <taxon>Euarchontoglires</taxon>
        <taxon>Primates</taxon>
        <taxon>Haplorrhini</taxon>
        <taxon>Catarrhini</taxon>
        <taxon>Hominidae</taxon>
        <taxon>Homo</taxon>
    </lineage>
</organism>